<feature type="chain" id="PRO_0000390403" description="Probable WRKY transcription factor protein 1">
    <location>
        <begin position="1"/>
        <end position="1271"/>
    </location>
</feature>
<feature type="DNA-binding region" description="WRKY 1" evidence="3">
    <location>
        <begin position="808"/>
        <end position="872"/>
    </location>
</feature>
<feature type="DNA-binding region" description="WRKY 2" evidence="3">
    <location>
        <begin position="1105"/>
        <end position="1167"/>
    </location>
</feature>
<feature type="region of interest" description="Disordered" evidence="4">
    <location>
        <begin position="1"/>
        <end position="138"/>
    </location>
</feature>
<feature type="region of interest" description="Disordered" evidence="4">
    <location>
        <begin position="204"/>
        <end position="312"/>
    </location>
</feature>
<feature type="region of interest" description="Disordered" evidence="4">
    <location>
        <begin position="370"/>
        <end position="515"/>
    </location>
</feature>
<feature type="region of interest" description="Disordered" evidence="4">
    <location>
        <begin position="578"/>
        <end position="650"/>
    </location>
</feature>
<feature type="region of interest" description="Disordered" evidence="4">
    <location>
        <begin position="667"/>
        <end position="811"/>
    </location>
</feature>
<feature type="region of interest" description="Disordered" evidence="4">
    <location>
        <begin position="890"/>
        <end position="1095"/>
    </location>
</feature>
<feature type="region of interest" description="Disordered" evidence="4">
    <location>
        <begin position="1180"/>
        <end position="1210"/>
    </location>
</feature>
<feature type="coiled-coil region" evidence="2">
    <location>
        <begin position="9"/>
        <end position="71"/>
    </location>
</feature>
<feature type="coiled-coil region" evidence="2">
    <location>
        <begin position="320"/>
        <end position="372"/>
    </location>
</feature>
<feature type="coiled-coil region" evidence="2">
    <location>
        <begin position="520"/>
        <end position="574"/>
    </location>
</feature>
<feature type="coiled-coil region" evidence="2">
    <location>
        <begin position="766"/>
        <end position="786"/>
    </location>
</feature>
<feature type="coiled-coil region" evidence="2">
    <location>
        <begin position="1013"/>
        <end position="1040"/>
    </location>
</feature>
<feature type="compositionally biased region" description="Polar residues" evidence="4">
    <location>
        <begin position="1"/>
        <end position="12"/>
    </location>
</feature>
<feature type="compositionally biased region" description="Low complexity" evidence="4">
    <location>
        <begin position="13"/>
        <end position="103"/>
    </location>
</feature>
<feature type="compositionally biased region" description="Low complexity" evidence="4">
    <location>
        <begin position="116"/>
        <end position="135"/>
    </location>
</feature>
<feature type="compositionally biased region" description="Low complexity" evidence="4">
    <location>
        <begin position="204"/>
        <end position="216"/>
    </location>
</feature>
<feature type="compositionally biased region" description="Low complexity" evidence="4">
    <location>
        <begin position="223"/>
        <end position="259"/>
    </location>
</feature>
<feature type="compositionally biased region" description="Acidic residues" evidence="4">
    <location>
        <begin position="260"/>
        <end position="274"/>
    </location>
</feature>
<feature type="compositionally biased region" description="Polar residues" evidence="4">
    <location>
        <begin position="297"/>
        <end position="312"/>
    </location>
</feature>
<feature type="compositionally biased region" description="Low complexity" evidence="4">
    <location>
        <begin position="370"/>
        <end position="388"/>
    </location>
</feature>
<feature type="compositionally biased region" description="Acidic residues" evidence="4">
    <location>
        <begin position="413"/>
        <end position="442"/>
    </location>
</feature>
<feature type="compositionally biased region" description="Low complexity" evidence="4">
    <location>
        <begin position="443"/>
        <end position="458"/>
    </location>
</feature>
<feature type="compositionally biased region" description="Basic and acidic residues" evidence="4">
    <location>
        <begin position="475"/>
        <end position="487"/>
    </location>
</feature>
<feature type="compositionally biased region" description="Polar residues" evidence="4">
    <location>
        <begin position="488"/>
        <end position="515"/>
    </location>
</feature>
<feature type="compositionally biased region" description="Basic and acidic residues" evidence="4">
    <location>
        <begin position="578"/>
        <end position="587"/>
    </location>
</feature>
<feature type="compositionally biased region" description="Low complexity" evidence="4">
    <location>
        <begin position="610"/>
        <end position="642"/>
    </location>
</feature>
<feature type="compositionally biased region" description="Polar residues" evidence="4">
    <location>
        <begin position="672"/>
        <end position="702"/>
    </location>
</feature>
<feature type="compositionally biased region" description="Low complexity" evidence="4">
    <location>
        <begin position="703"/>
        <end position="715"/>
    </location>
</feature>
<feature type="compositionally biased region" description="Low complexity" evidence="4">
    <location>
        <begin position="725"/>
        <end position="766"/>
    </location>
</feature>
<feature type="compositionally biased region" description="Low complexity" evidence="4">
    <location>
        <begin position="774"/>
        <end position="811"/>
    </location>
</feature>
<feature type="compositionally biased region" description="Low complexity" evidence="4">
    <location>
        <begin position="895"/>
        <end position="918"/>
    </location>
</feature>
<feature type="compositionally biased region" description="Gly residues" evidence="4">
    <location>
        <begin position="919"/>
        <end position="937"/>
    </location>
</feature>
<feature type="compositionally biased region" description="Low complexity" evidence="4">
    <location>
        <begin position="938"/>
        <end position="956"/>
    </location>
</feature>
<feature type="compositionally biased region" description="Polar residues" evidence="4">
    <location>
        <begin position="957"/>
        <end position="966"/>
    </location>
</feature>
<feature type="compositionally biased region" description="Low complexity" evidence="4">
    <location>
        <begin position="967"/>
        <end position="995"/>
    </location>
</feature>
<feature type="compositionally biased region" description="Basic and acidic residues" evidence="4">
    <location>
        <begin position="998"/>
        <end position="1010"/>
    </location>
</feature>
<feature type="compositionally biased region" description="Acidic residues" evidence="4">
    <location>
        <begin position="1011"/>
        <end position="1021"/>
    </location>
</feature>
<feature type="compositionally biased region" description="Low complexity" evidence="4">
    <location>
        <begin position="1025"/>
        <end position="1085"/>
    </location>
</feature>
<feature type="compositionally biased region" description="Low complexity" evidence="4">
    <location>
        <begin position="1184"/>
        <end position="1210"/>
    </location>
</feature>
<feature type="binding site" evidence="1">
    <location>
        <position position="839"/>
    </location>
    <ligand>
        <name>Zn(2+)</name>
        <dbReference type="ChEBI" id="CHEBI:29105"/>
    </ligand>
</feature>
<feature type="binding site" evidence="1">
    <location>
        <position position="844"/>
    </location>
    <ligand>
        <name>Zn(2+)</name>
        <dbReference type="ChEBI" id="CHEBI:29105"/>
    </ligand>
</feature>
<feature type="binding site" evidence="1">
    <location>
        <position position="867"/>
    </location>
    <ligand>
        <name>Zn(2+)</name>
        <dbReference type="ChEBI" id="CHEBI:29105"/>
    </ligand>
</feature>
<feature type="binding site" evidence="1">
    <location>
        <position position="869"/>
    </location>
    <ligand>
        <name>Zn(2+)</name>
        <dbReference type="ChEBI" id="CHEBI:29105"/>
    </ligand>
</feature>
<feature type="binding site" evidence="1">
    <location>
        <position position="1136"/>
    </location>
    <ligand>
        <name>Zn(2+)</name>
        <dbReference type="ChEBI" id="CHEBI:29105"/>
    </ligand>
</feature>
<feature type="binding site" evidence="1">
    <location>
        <position position="1141"/>
    </location>
    <ligand>
        <name>Zn(2+)</name>
        <dbReference type="ChEBI" id="CHEBI:29105"/>
    </ligand>
</feature>
<feature type="binding site" evidence="1">
    <location>
        <position position="1162"/>
    </location>
    <ligand>
        <name>Zn(2+)</name>
        <dbReference type="ChEBI" id="CHEBI:29105"/>
    </ligand>
</feature>
<feature type="binding site" evidence="1">
    <location>
        <position position="1164"/>
    </location>
    <ligand>
        <name>Zn(2+)</name>
        <dbReference type="ChEBI" id="CHEBI:29105"/>
    </ligand>
</feature>
<gene>
    <name type="primary">wrky1</name>
    <name type="ORF">DDB_G0275267</name>
</gene>
<name>WRKY1_DICDI</name>
<dbReference type="EMBL" id="AAFI02000013">
    <property type="protein sequence ID" value="EAL69914.2"/>
    <property type="molecule type" value="Genomic_DNA"/>
</dbReference>
<dbReference type="RefSeq" id="XP_643786.2">
    <property type="nucleotide sequence ID" value="XM_638694.2"/>
</dbReference>
<dbReference type="SMR" id="Q554C5"/>
<dbReference type="FunCoup" id="Q554C5">
    <property type="interactions" value="394"/>
</dbReference>
<dbReference type="STRING" id="44689.Q554C5"/>
<dbReference type="PaxDb" id="44689-DDB0220001"/>
<dbReference type="EnsemblProtists" id="EAL69914">
    <property type="protein sequence ID" value="EAL69914"/>
    <property type="gene ID" value="DDB_G0275267"/>
</dbReference>
<dbReference type="GeneID" id="8619831"/>
<dbReference type="KEGG" id="ddi:DDB_G0275267"/>
<dbReference type="dictyBase" id="DDB_G0275267">
    <property type="gene designation" value="wrky1"/>
</dbReference>
<dbReference type="VEuPathDB" id="AmoebaDB:DDB_G0275267"/>
<dbReference type="eggNOG" id="ENOG502QRXJ">
    <property type="taxonomic scope" value="Eukaryota"/>
</dbReference>
<dbReference type="HOGENOM" id="CLU_263964_0_0_1"/>
<dbReference type="InParanoid" id="Q554C5"/>
<dbReference type="OMA" id="DESPMIT"/>
<dbReference type="PRO" id="PR:Q554C5"/>
<dbReference type="Proteomes" id="UP000002195">
    <property type="component" value="Chromosome 2"/>
</dbReference>
<dbReference type="GO" id="GO:0005634">
    <property type="term" value="C:nucleus"/>
    <property type="evidence" value="ECO:0000305"/>
    <property type="project" value="dictyBase"/>
</dbReference>
<dbReference type="GO" id="GO:0003677">
    <property type="term" value="F:DNA binding"/>
    <property type="evidence" value="ECO:0000250"/>
    <property type="project" value="dictyBase"/>
</dbReference>
<dbReference type="GO" id="GO:0003700">
    <property type="term" value="F:DNA-binding transcription factor activity"/>
    <property type="evidence" value="ECO:0007669"/>
    <property type="project" value="InterPro"/>
</dbReference>
<dbReference type="GO" id="GO:0043565">
    <property type="term" value="F:sequence-specific DNA binding"/>
    <property type="evidence" value="ECO:0007669"/>
    <property type="project" value="InterPro"/>
</dbReference>
<dbReference type="GO" id="GO:0008270">
    <property type="term" value="F:zinc ion binding"/>
    <property type="evidence" value="ECO:0000250"/>
    <property type="project" value="dictyBase"/>
</dbReference>
<dbReference type="GO" id="GO:0006355">
    <property type="term" value="P:regulation of DNA-templated transcription"/>
    <property type="evidence" value="ECO:0000250"/>
    <property type="project" value="dictyBase"/>
</dbReference>
<dbReference type="FunFam" id="2.20.25.80:FF:000006">
    <property type="entry name" value="WRKY transcription factor"/>
    <property type="match status" value="1"/>
</dbReference>
<dbReference type="Gene3D" id="2.20.25.80">
    <property type="entry name" value="WRKY domain"/>
    <property type="match status" value="2"/>
</dbReference>
<dbReference type="InterPro" id="IPR003657">
    <property type="entry name" value="WRKY_dom"/>
</dbReference>
<dbReference type="InterPro" id="IPR036576">
    <property type="entry name" value="WRKY_dom_sf"/>
</dbReference>
<dbReference type="InterPro" id="IPR044810">
    <property type="entry name" value="WRKY_plant"/>
</dbReference>
<dbReference type="PANTHER" id="PTHR31221">
    <property type="entry name" value="WRKY TRANSCRIPTION FACTOR PROTEIN 1-RELATED"/>
    <property type="match status" value="1"/>
</dbReference>
<dbReference type="PANTHER" id="PTHR31221:SF193">
    <property type="entry name" value="WRKY TRANSCRIPTION FACTOR PROTEIN 1-RELATED"/>
    <property type="match status" value="1"/>
</dbReference>
<dbReference type="Pfam" id="PF03106">
    <property type="entry name" value="WRKY"/>
    <property type="match status" value="2"/>
</dbReference>
<dbReference type="SMART" id="SM00774">
    <property type="entry name" value="WRKY"/>
    <property type="match status" value="2"/>
</dbReference>
<dbReference type="SUPFAM" id="SSF81995">
    <property type="entry name" value="beta-sandwich domain of Sec23/24"/>
    <property type="match status" value="1"/>
</dbReference>
<dbReference type="SUPFAM" id="SSF118290">
    <property type="entry name" value="WRKY DNA-binding domain"/>
    <property type="match status" value="2"/>
</dbReference>
<dbReference type="PROSITE" id="PS50811">
    <property type="entry name" value="WRKY"/>
    <property type="match status" value="2"/>
</dbReference>
<keyword id="KW-0175">Coiled coil</keyword>
<keyword id="KW-0238">DNA-binding</keyword>
<keyword id="KW-0479">Metal-binding</keyword>
<keyword id="KW-0539">Nucleus</keyword>
<keyword id="KW-1185">Reference proteome</keyword>
<keyword id="KW-0677">Repeat</keyword>
<keyword id="KW-0804">Transcription</keyword>
<keyword id="KW-0805">Transcription regulation</keyword>
<keyword id="KW-0862">Zinc</keyword>
<proteinExistence type="inferred from homology"/>
<protein>
    <recommendedName>
        <fullName>Probable WRKY transcription factor protein 1</fullName>
    </recommendedName>
    <alternativeName>
        <fullName>WRKY domain-containing protein 1</fullName>
    </alternativeName>
</protein>
<reference key="1">
    <citation type="journal article" date="2002" name="Nature">
        <title>Sequence and analysis of chromosome 2 of Dictyostelium discoideum.</title>
        <authorList>
            <person name="Gloeckner G."/>
            <person name="Eichinger L."/>
            <person name="Szafranski K."/>
            <person name="Pachebat J.A."/>
            <person name="Bankier A.T."/>
            <person name="Dear P.H."/>
            <person name="Lehmann R."/>
            <person name="Baumgart C."/>
            <person name="Parra G."/>
            <person name="Abril J.F."/>
            <person name="Guigo R."/>
            <person name="Kumpf K."/>
            <person name="Tunggal B."/>
            <person name="Cox E.C."/>
            <person name="Quail M.A."/>
            <person name="Platzer M."/>
            <person name="Rosenthal A."/>
            <person name="Noegel A.A."/>
        </authorList>
    </citation>
    <scope>NUCLEOTIDE SEQUENCE [LARGE SCALE GENOMIC DNA]</scope>
    <source>
        <strain>AX4</strain>
    </source>
</reference>
<reference key="2">
    <citation type="journal article" date="2005" name="Nature">
        <title>The genome of the social amoeba Dictyostelium discoideum.</title>
        <authorList>
            <person name="Eichinger L."/>
            <person name="Pachebat J.A."/>
            <person name="Gloeckner G."/>
            <person name="Rajandream M.A."/>
            <person name="Sucgang R."/>
            <person name="Berriman M."/>
            <person name="Song J."/>
            <person name="Olsen R."/>
            <person name="Szafranski K."/>
            <person name="Xu Q."/>
            <person name="Tunggal B."/>
            <person name="Kummerfeld S."/>
            <person name="Madera M."/>
            <person name="Konfortov B.A."/>
            <person name="Rivero F."/>
            <person name="Bankier A.T."/>
            <person name="Lehmann R."/>
            <person name="Hamlin N."/>
            <person name="Davies R."/>
            <person name="Gaudet P."/>
            <person name="Fey P."/>
            <person name="Pilcher K."/>
            <person name="Chen G."/>
            <person name="Saunders D."/>
            <person name="Sodergren E.J."/>
            <person name="Davis P."/>
            <person name="Kerhornou A."/>
            <person name="Nie X."/>
            <person name="Hall N."/>
            <person name="Anjard C."/>
            <person name="Hemphill L."/>
            <person name="Bason N."/>
            <person name="Farbrother P."/>
            <person name="Desany B."/>
            <person name="Just E."/>
            <person name="Morio T."/>
            <person name="Rost R."/>
            <person name="Churcher C.M."/>
            <person name="Cooper J."/>
            <person name="Haydock S."/>
            <person name="van Driessche N."/>
            <person name="Cronin A."/>
            <person name="Goodhead I."/>
            <person name="Muzny D.M."/>
            <person name="Mourier T."/>
            <person name="Pain A."/>
            <person name="Lu M."/>
            <person name="Harper D."/>
            <person name="Lindsay R."/>
            <person name="Hauser H."/>
            <person name="James K.D."/>
            <person name="Quiles M."/>
            <person name="Madan Babu M."/>
            <person name="Saito T."/>
            <person name="Buchrieser C."/>
            <person name="Wardroper A."/>
            <person name="Felder M."/>
            <person name="Thangavelu M."/>
            <person name="Johnson D."/>
            <person name="Knights A."/>
            <person name="Loulseged H."/>
            <person name="Mungall K.L."/>
            <person name="Oliver K."/>
            <person name="Price C."/>
            <person name="Quail M.A."/>
            <person name="Urushihara H."/>
            <person name="Hernandez J."/>
            <person name="Rabbinowitsch E."/>
            <person name="Steffen D."/>
            <person name="Sanders M."/>
            <person name="Ma J."/>
            <person name="Kohara Y."/>
            <person name="Sharp S."/>
            <person name="Simmonds M.N."/>
            <person name="Spiegler S."/>
            <person name="Tivey A."/>
            <person name="Sugano S."/>
            <person name="White B."/>
            <person name="Walker D."/>
            <person name="Woodward J.R."/>
            <person name="Winckler T."/>
            <person name="Tanaka Y."/>
            <person name="Shaulsky G."/>
            <person name="Schleicher M."/>
            <person name="Weinstock G.M."/>
            <person name="Rosenthal A."/>
            <person name="Cox E.C."/>
            <person name="Chisholm R.L."/>
            <person name="Gibbs R.A."/>
            <person name="Loomis W.F."/>
            <person name="Platzer M."/>
            <person name="Kay R.R."/>
            <person name="Williams J.G."/>
            <person name="Dear P.H."/>
            <person name="Noegel A.A."/>
            <person name="Barrell B.G."/>
            <person name="Kuspa A."/>
        </authorList>
    </citation>
    <scope>NUCLEOTIDE SEQUENCE [LARGE SCALE GENOMIC DNA]</scope>
    <source>
        <strain>AX4</strain>
    </source>
</reference>
<reference key="3">
    <citation type="journal article" date="2005" name="BMC Evol. Biol.">
        <title>The WRKY transcription factor superfamily: its origin in eukaryotes and expansion in plants.</title>
        <authorList>
            <person name="Zhang Y."/>
            <person name="Wang L."/>
        </authorList>
    </citation>
    <scope>IDENTIFICATION FROM ESTS</scope>
</reference>
<evidence type="ECO:0000250" key="1">
    <source>
        <dbReference type="UniProtKB" id="Q9SI37"/>
    </source>
</evidence>
<evidence type="ECO:0000255" key="2"/>
<evidence type="ECO:0000255" key="3">
    <source>
        <dbReference type="PROSITE-ProRule" id="PRU00223"/>
    </source>
</evidence>
<evidence type="ECO:0000256" key="4">
    <source>
        <dbReference type="SAM" id="MobiDB-lite"/>
    </source>
</evidence>
<evidence type="ECO:0000305" key="5"/>
<organism>
    <name type="scientific">Dictyostelium discoideum</name>
    <name type="common">Social amoeba</name>
    <dbReference type="NCBI Taxonomy" id="44689"/>
    <lineage>
        <taxon>Eukaryota</taxon>
        <taxon>Amoebozoa</taxon>
        <taxon>Evosea</taxon>
        <taxon>Eumycetozoa</taxon>
        <taxon>Dictyostelia</taxon>
        <taxon>Dictyosteliales</taxon>
        <taxon>Dictyosteliaceae</taxon>
        <taxon>Dictyostelium</taxon>
    </lineage>
</organism>
<sequence length="1271" mass="144634">MGAQYSTELNKYNNNNNNNNNNNNNNNNNNNNHTISGNENLNNNNNNNNNNNNYNNNNNNNNNNNNNNNNNNNNNNNNNNNNNNNNKNNGNSNSNSNNNNNNNGINKYSNYFESLINNTNKDTNIPNNSNSNNNNSDRDFIQNMIKSANQIKPGEKELVLFHKLHQSLKENQSFSIEELRNSSILSISPDKSFLTNINEINVNNNNNNNNNNNENNKVGVNGSSTTTTTTTTTTTNNNSNNNNNNNNNNNNNNNNNNNNNEDDEDDYGDDDTIENNEPTFVDKPNKSAKLQKPKLKSNLNDTNGGNSPQQNGKISKYMAKKLLALQQKQLEQEQEQKQQQKQQQQQQQQQQQQQQQQQQQQQKDAIENINNNNNNKLQPIVKNSVNKTTKQKKNKTTTHNVKQQITFLTKSDNEDEYDASDEYIDDDDDDDEKYDDDDDEYFEGNNNNNYKKNNISNKSKNKNNNDESDSFSESEIFKQKKLNHDKNQSNPKQQLTSHSEFDNSLLNKNQSRTNSKIQKLQIKEENYHQIQQEHGEKQQQQQQQQQQPQQQQQQQQQQQQQQQQEMQVDKEQTEKIINTNKKEEQKPNDYFPPIPTNPFKRDNETAFGKNNENNNNNNNNNNNNNNNNNNNNNNNNNNYRNNKPNGEGFLSNLKIIPPMISSSPYYSKKSSNVVPTSPKSNLSDQQPPFSPVQISPQKQSPATTTTTTTTTTPTPLKKQKKNKTNNNINNNNINNNNNNNNNNNNNNNNNNNNNNNNNNYSINNINNEEDEENNSTQNNNNNNNNNNNSPQNSNTNSNNSNNSNNSNNISNIVSDGYQWRKYGQKNVKGSLHPRHYYKCTFQGCNVRKQVERIGDTNQNSTVYKGEHCHGFPQTTRVVSDQQAFRNSVMFEGLDGNNNNNNNNNNNNNNYSSNSNSNGNGNGNGNGNGNGNGNGNGNSNGNQDQNGNSFNDQNGDSPTQHGQISPMNSPKNTIPTTTTTTTSISTYVNTNSTNKKNNSKQEKKISVKNETTDDDEFQEDIDQLSNNNNNNNNNNNNNNNNNNNNNNNNNNNNNNNNNNNNNNNNNNNNDDNNNNNNNNNNNNNNNRFNGTSESKGSKKLVIETGSSIDHLDDGFFWRKYGQKSVKGSPFPKSYFKCAELTCPVKKQVIQQDSKYINTYRGKHNHDPPESEAIEKRKKHFNGLYNNNNNNNNNNNNNNNNNNNNNNINNINNNNINNLNSLNNINNINNNNNSNQINNFSGSIQNNLKNILKEQLKEAGKLHNEIENNLIDD</sequence>
<accession>Q554C5</accession>
<comment type="function">
    <text evidence="1">Probable transcription factor. Interacts specifically with the W box (5'-(T)TGAC[CT]-3'), a frequently occurring elicitor-responsive cis-acting element.</text>
</comment>
<comment type="subcellular location">
    <subcellularLocation>
        <location evidence="1">Nucleus</location>
    </subcellularLocation>
</comment>
<comment type="similarity">
    <text evidence="5">Belongs to the WRKY group I family.</text>
</comment>